<keyword id="KW-0028">Amino-acid biosynthesis</keyword>
<keyword id="KW-0846">Cobalamin</keyword>
<keyword id="KW-0170">Cobalt</keyword>
<keyword id="KW-0479">Metal-binding</keyword>
<keyword id="KW-0486">Methionine biosynthesis</keyword>
<keyword id="KW-0489">Methyltransferase</keyword>
<keyword id="KW-0677">Repeat</keyword>
<keyword id="KW-0949">S-adenosyl-L-methionine</keyword>
<keyword id="KW-0808">Transferase</keyword>
<keyword id="KW-0862">Zinc</keyword>
<sequence length="1226" mass="136266">MAGSNIKVQIEKQLSERILLIDGGMGTMIQGYKFEEKDYRGGRFNQWHCDLKGNNDLLVLSQPQIIRDIHEAYLEAGADILETNTFNATTIAMADYDMESLSEEINFEAAKLAREVADKWTEKTPNKPRYVAGVLGPTNRTCSISPDVNDPGFRNVSFDELVEAYSESTRALIRGGSDLILIETIFDTLNAKACSFAVESVFEELGITLPVMISGTITDASGRTLSGQTTEAFYNALRHVKPISFGLNCALGPDELREYVSELSRISECYVSAHPNAGLPNAFGEYDLSPEDMAEHVAEWASSGFLNLIGGCCGTTPEHIRQMALVVEGVKPRQLPELPVACRLSGLEPLTIEKDSLFINVGERTNVTGSARFKRLIKEELYDEALSVAQEQVENGAQIIDINMDEGMLDAEACMVRFLNLCASEPEISKVPVMVDSSKWEVIEAGLKCIQGKGIVNSISLKEGKEKFVHQAKLIRRYGAAVIVMAFDEVGQADTRERKIEICTNAYNILVDEVGFPPEDIIFDPNIFAVATGIDEHNNYAVDFIEAVGDIKRTLPHAMISGGVSNVSFSFRGNNYVREAIHAVFLYHCFKNGMDMGIVNAGQLEIYDNVPEDLREAVEDVVLNRRDDSTERLLDIATEYLERAVGKVEDKSALEWRDWPVEKRLEHSLVKGITEFIVEDTEEARINAERPIEVIEGPLMDGMNVVGDLFGEGKMFLPQVVKSARVMKQAVAHLEPFINASKEVGATNGKILLATVKGDVHDIGKNIVGVVLQCNNYEIIDLGVMVSCETILKVAKEENVDIIGLSGLITPSLDEMVHVAKEMERQGFDLPLLIGGATTSKAHTAVKIEQNYSQPVVYVNNASRAVGVCTSLLSNELKPSFVEKLDIDYERVREQHSRKQPRTKPVTLEVARANKVAIDWASYTPPVPLKPGVHIFDNFDVSTLRNYIDWTPFFMTWSLVGKYPKILEHEEVGEEAKRLFKDANDLLDRVEKEGLLKARGMCALFPASSVGDDIEVYTDESRTTVAKVLHNLRQQTEKPKGFNYCLSDYIAPKESGKNDWIGGFAVTGGIGERELADEYKANGDDYNAIMIQAVADRLAEAFAEYLHEKVRKEIWGYSPNETLSNDDLIREKYQGIRPAPGYPACPEHTEKGALWELMNVEESIGMSLTSSYAMWPGASVSGMYFSHPDSRYFAIAQIQQDQAESYADRKGWNMLEAEKWLGPNLN</sequence>
<dbReference type="EC" id="2.1.1.13"/>
<dbReference type="EMBL" id="AB039955">
    <property type="protein sequence ID" value="BAB39355.1"/>
    <property type="molecule type" value="Genomic_DNA"/>
</dbReference>
<dbReference type="SMR" id="Q9AJQ8"/>
<dbReference type="UniPathway" id="UPA00051">
    <property type="reaction ID" value="UER00081"/>
</dbReference>
<dbReference type="GO" id="GO:0005829">
    <property type="term" value="C:cytosol"/>
    <property type="evidence" value="ECO:0007669"/>
    <property type="project" value="TreeGrafter"/>
</dbReference>
<dbReference type="GO" id="GO:0031419">
    <property type="term" value="F:cobalamin binding"/>
    <property type="evidence" value="ECO:0007669"/>
    <property type="project" value="UniProtKB-KW"/>
</dbReference>
<dbReference type="GO" id="GO:0008705">
    <property type="term" value="F:methionine synthase activity"/>
    <property type="evidence" value="ECO:0007669"/>
    <property type="project" value="UniProtKB-EC"/>
</dbReference>
<dbReference type="GO" id="GO:0008270">
    <property type="term" value="F:zinc ion binding"/>
    <property type="evidence" value="ECO:0007669"/>
    <property type="project" value="InterPro"/>
</dbReference>
<dbReference type="GO" id="GO:0050667">
    <property type="term" value="P:homocysteine metabolic process"/>
    <property type="evidence" value="ECO:0007669"/>
    <property type="project" value="TreeGrafter"/>
</dbReference>
<dbReference type="GO" id="GO:0032259">
    <property type="term" value="P:methylation"/>
    <property type="evidence" value="ECO:0007669"/>
    <property type="project" value="UniProtKB-KW"/>
</dbReference>
<dbReference type="GO" id="GO:0046653">
    <property type="term" value="P:tetrahydrofolate metabolic process"/>
    <property type="evidence" value="ECO:0007669"/>
    <property type="project" value="TreeGrafter"/>
</dbReference>
<dbReference type="CDD" id="cd02069">
    <property type="entry name" value="methionine_synthase_B12_BD"/>
    <property type="match status" value="1"/>
</dbReference>
<dbReference type="CDD" id="cd00740">
    <property type="entry name" value="MeTr"/>
    <property type="match status" value="1"/>
</dbReference>
<dbReference type="FunFam" id="1.10.1240.10:FF:000001">
    <property type="entry name" value="Methionine synthase"/>
    <property type="match status" value="1"/>
</dbReference>
<dbReference type="FunFam" id="3.20.20.20:FF:000002">
    <property type="entry name" value="Methionine synthase"/>
    <property type="match status" value="1"/>
</dbReference>
<dbReference type="FunFam" id="3.20.20.330:FF:000001">
    <property type="entry name" value="Methionine synthase"/>
    <property type="match status" value="1"/>
</dbReference>
<dbReference type="FunFam" id="3.40.50.280:FF:000001">
    <property type="entry name" value="Methionine synthase"/>
    <property type="match status" value="1"/>
</dbReference>
<dbReference type="Gene3D" id="3.40.50.280">
    <property type="entry name" value="Cobalamin-binding domain"/>
    <property type="match status" value="1"/>
</dbReference>
<dbReference type="Gene3D" id="1.10.288.10">
    <property type="entry name" value="Cobalamin-dependent Methionine Synthase, domain 2"/>
    <property type="match status" value="1"/>
</dbReference>
<dbReference type="Gene3D" id="3.20.20.20">
    <property type="entry name" value="Dihydropteroate synthase-like"/>
    <property type="match status" value="1"/>
</dbReference>
<dbReference type="Gene3D" id="3.20.20.330">
    <property type="entry name" value="Homocysteine-binding-like domain"/>
    <property type="match status" value="1"/>
</dbReference>
<dbReference type="Gene3D" id="1.10.1240.10">
    <property type="entry name" value="Methionine synthase domain"/>
    <property type="match status" value="1"/>
</dbReference>
<dbReference type="Gene3D" id="3.10.196.10">
    <property type="entry name" value="Vitamin B12-dependent methionine synthase, activation domain"/>
    <property type="match status" value="1"/>
</dbReference>
<dbReference type="InterPro" id="IPR003759">
    <property type="entry name" value="Cbl-bd_cap"/>
</dbReference>
<dbReference type="InterPro" id="IPR006158">
    <property type="entry name" value="Cobalamin-bd"/>
</dbReference>
<dbReference type="InterPro" id="IPR036724">
    <property type="entry name" value="Cobalamin-bd_sf"/>
</dbReference>
<dbReference type="InterPro" id="IPR011005">
    <property type="entry name" value="Dihydropteroate_synth-like_sf"/>
</dbReference>
<dbReference type="InterPro" id="IPR003726">
    <property type="entry name" value="HCY_dom"/>
</dbReference>
<dbReference type="InterPro" id="IPR036589">
    <property type="entry name" value="HCY_dom_sf"/>
</dbReference>
<dbReference type="InterPro" id="IPR050554">
    <property type="entry name" value="Met_Synthase/Corrinoid"/>
</dbReference>
<dbReference type="InterPro" id="IPR033706">
    <property type="entry name" value="Met_synthase_B12-bd"/>
</dbReference>
<dbReference type="InterPro" id="IPR011822">
    <property type="entry name" value="MetH"/>
</dbReference>
<dbReference type="InterPro" id="IPR036594">
    <property type="entry name" value="Meth_synthase_dom"/>
</dbReference>
<dbReference type="InterPro" id="IPR000489">
    <property type="entry name" value="Pterin-binding_dom"/>
</dbReference>
<dbReference type="InterPro" id="IPR004223">
    <property type="entry name" value="VitB12-dep_Met_synth_activ_dom"/>
</dbReference>
<dbReference type="InterPro" id="IPR037010">
    <property type="entry name" value="VitB12-dep_Met_synth_activ_sf"/>
</dbReference>
<dbReference type="NCBIfam" id="TIGR02082">
    <property type="entry name" value="metH"/>
    <property type="match status" value="1"/>
</dbReference>
<dbReference type="NCBIfam" id="NF007024">
    <property type="entry name" value="PRK09490.1"/>
    <property type="match status" value="1"/>
</dbReference>
<dbReference type="PANTHER" id="PTHR45833">
    <property type="entry name" value="METHIONINE SYNTHASE"/>
    <property type="match status" value="1"/>
</dbReference>
<dbReference type="PANTHER" id="PTHR45833:SF1">
    <property type="entry name" value="METHIONINE SYNTHASE"/>
    <property type="match status" value="1"/>
</dbReference>
<dbReference type="Pfam" id="PF02310">
    <property type="entry name" value="B12-binding"/>
    <property type="match status" value="1"/>
</dbReference>
<dbReference type="Pfam" id="PF02607">
    <property type="entry name" value="B12-binding_2"/>
    <property type="match status" value="1"/>
</dbReference>
<dbReference type="Pfam" id="PF02965">
    <property type="entry name" value="Met_synt_B12"/>
    <property type="match status" value="1"/>
</dbReference>
<dbReference type="Pfam" id="PF00809">
    <property type="entry name" value="Pterin_bind"/>
    <property type="match status" value="1"/>
</dbReference>
<dbReference type="Pfam" id="PF02574">
    <property type="entry name" value="S-methyl_trans"/>
    <property type="match status" value="1"/>
</dbReference>
<dbReference type="PIRSF" id="PIRSF000381">
    <property type="entry name" value="MetH"/>
    <property type="match status" value="1"/>
</dbReference>
<dbReference type="SMART" id="SM01018">
    <property type="entry name" value="B12-binding_2"/>
    <property type="match status" value="1"/>
</dbReference>
<dbReference type="SUPFAM" id="SSF52242">
    <property type="entry name" value="Cobalamin (vitamin B12)-binding domain"/>
    <property type="match status" value="1"/>
</dbReference>
<dbReference type="SUPFAM" id="SSF51717">
    <property type="entry name" value="Dihydropteroate synthetase-like"/>
    <property type="match status" value="1"/>
</dbReference>
<dbReference type="SUPFAM" id="SSF82282">
    <property type="entry name" value="Homocysteine S-methyltransferase"/>
    <property type="match status" value="1"/>
</dbReference>
<dbReference type="SUPFAM" id="SSF56507">
    <property type="entry name" value="Methionine synthase activation domain-like"/>
    <property type="match status" value="1"/>
</dbReference>
<dbReference type="SUPFAM" id="SSF47644">
    <property type="entry name" value="Methionine synthase domain"/>
    <property type="match status" value="1"/>
</dbReference>
<dbReference type="PROSITE" id="PS50974">
    <property type="entry name" value="ADOMET_ACTIVATION"/>
    <property type="match status" value="1"/>
</dbReference>
<dbReference type="PROSITE" id="PS51332">
    <property type="entry name" value="B12_BINDING"/>
    <property type="match status" value="1"/>
</dbReference>
<dbReference type="PROSITE" id="PS51337">
    <property type="entry name" value="B12_BINDING_NTER"/>
    <property type="match status" value="1"/>
</dbReference>
<dbReference type="PROSITE" id="PS50970">
    <property type="entry name" value="HCY"/>
    <property type="match status" value="1"/>
</dbReference>
<dbReference type="PROSITE" id="PS50972">
    <property type="entry name" value="PTERIN_BINDING"/>
    <property type="match status" value="1"/>
</dbReference>
<gene>
    <name type="primary">metH</name>
</gene>
<evidence type="ECO:0000250" key="1"/>
<evidence type="ECO:0000250" key="2">
    <source>
        <dbReference type="UniProtKB" id="P13009"/>
    </source>
</evidence>
<evidence type="ECO:0000255" key="3">
    <source>
        <dbReference type="PROSITE-ProRule" id="PRU00333"/>
    </source>
</evidence>
<evidence type="ECO:0000255" key="4">
    <source>
        <dbReference type="PROSITE-ProRule" id="PRU00334"/>
    </source>
</evidence>
<evidence type="ECO:0000255" key="5">
    <source>
        <dbReference type="PROSITE-ProRule" id="PRU00346"/>
    </source>
</evidence>
<evidence type="ECO:0000255" key="6">
    <source>
        <dbReference type="PROSITE-ProRule" id="PRU00666"/>
    </source>
</evidence>
<evidence type="ECO:0000255" key="7">
    <source>
        <dbReference type="PROSITE-ProRule" id="PRU00667"/>
    </source>
</evidence>
<evidence type="ECO:0000305" key="8"/>
<protein>
    <recommendedName>
        <fullName>Methionine synthase</fullName>
        <ecNumber>2.1.1.13</ecNumber>
    </recommendedName>
    <alternativeName>
        <fullName>5-methyltetrahydrofolate--homocysteine methyltransferase</fullName>
    </alternativeName>
    <alternativeName>
        <fullName>Methionine synthase, vitamin-B12 dependent</fullName>
        <shortName>MS</shortName>
    </alternativeName>
</protein>
<feature type="chain" id="PRO_0000204540" description="Methionine synthase">
    <location>
        <begin position="1"/>
        <end position="1226"/>
    </location>
</feature>
<feature type="domain" description="Hcy-binding" evidence="3">
    <location>
        <begin position="7"/>
        <end position="327"/>
    </location>
</feature>
<feature type="domain" description="Pterin-binding" evidence="4">
    <location>
        <begin position="358"/>
        <end position="619"/>
    </location>
</feature>
<feature type="domain" description="B12-binding N-terminal" evidence="7">
    <location>
        <begin position="652"/>
        <end position="746"/>
    </location>
</feature>
<feature type="domain" description="B12-binding" evidence="6">
    <location>
        <begin position="748"/>
        <end position="883"/>
    </location>
</feature>
<feature type="domain" description="AdoMet activation" evidence="5">
    <location>
        <begin position="899"/>
        <end position="1226"/>
    </location>
</feature>
<feature type="binding site" evidence="3">
    <location>
        <position position="249"/>
    </location>
    <ligand>
        <name>Zn(2+)</name>
        <dbReference type="ChEBI" id="CHEBI:29105"/>
    </ligand>
</feature>
<feature type="binding site" evidence="3">
    <location>
        <position position="312"/>
    </location>
    <ligand>
        <name>Zn(2+)</name>
        <dbReference type="ChEBI" id="CHEBI:29105"/>
    </ligand>
</feature>
<feature type="binding site" evidence="3">
    <location>
        <position position="313"/>
    </location>
    <ligand>
        <name>Zn(2+)</name>
        <dbReference type="ChEBI" id="CHEBI:29105"/>
    </ligand>
</feature>
<feature type="binding site" evidence="2">
    <location>
        <position position="696"/>
    </location>
    <ligand>
        <name>methylcob(III)alamin</name>
        <dbReference type="ChEBI" id="CHEBI:28115"/>
    </ligand>
</feature>
<feature type="binding site" evidence="2">
    <location>
        <begin position="758"/>
        <end position="762"/>
    </location>
    <ligand>
        <name>methylcob(III)alamin</name>
        <dbReference type="ChEBI" id="CHEBI:28115"/>
    </ligand>
</feature>
<feature type="binding site" description="axial binding residue" evidence="2">
    <location>
        <position position="761"/>
    </location>
    <ligand>
        <name>methylcob(III)alamin</name>
        <dbReference type="ChEBI" id="CHEBI:28115"/>
    </ligand>
    <ligandPart>
        <name>Co</name>
        <dbReference type="ChEBI" id="CHEBI:27638"/>
    </ligandPart>
</feature>
<feature type="binding site" evidence="2">
    <location>
        <position position="806"/>
    </location>
    <ligand>
        <name>methylcob(III)alamin</name>
        <dbReference type="ChEBI" id="CHEBI:28115"/>
    </ligand>
</feature>
<feature type="binding site" evidence="2">
    <location>
        <position position="810"/>
    </location>
    <ligand>
        <name>methylcob(III)alamin</name>
        <dbReference type="ChEBI" id="CHEBI:28115"/>
    </ligand>
</feature>
<feature type="binding site" evidence="2">
    <location>
        <position position="862"/>
    </location>
    <ligand>
        <name>methylcob(III)alamin</name>
        <dbReference type="ChEBI" id="CHEBI:28115"/>
    </ligand>
</feature>
<feature type="binding site" evidence="1">
    <location>
        <position position="949"/>
    </location>
    <ligand>
        <name>S-adenosyl-L-methionine</name>
        <dbReference type="ChEBI" id="CHEBI:59789"/>
    </ligand>
</feature>
<feature type="binding site" evidence="1">
    <location>
        <position position="1137"/>
    </location>
    <ligand>
        <name>S-adenosyl-L-methionine</name>
        <dbReference type="ChEBI" id="CHEBI:59789"/>
    </ligand>
</feature>
<feature type="binding site" evidence="1">
    <location>
        <begin position="1192"/>
        <end position="1193"/>
    </location>
    <ligand>
        <name>S-adenosyl-L-methionine</name>
        <dbReference type="ChEBI" id="CHEBI:59789"/>
    </ligand>
</feature>
<reference key="1">
    <citation type="journal article" date="2001" name="Gene">
        <title>Identification of the cobalamin-dependent methionine synthase gene, metH, in Vibrio fischeri ATCC 7744 by sequencing using genomic DNA as a template.</title>
        <authorList>
            <person name="Kasai S."/>
            <person name="Yamazaki T."/>
        </authorList>
    </citation>
    <scope>NUCLEOTIDE SEQUENCE [GENOMIC DNA]</scope>
    <source>
        <strain>ATCC 7744 / DSM 507 / NCIMB 1281 / 398</strain>
    </source>
</reference>
<comment type="function">
    <text evidence="1">Catalyzes the transfer of a methyl group from methyl-cobalamin to homocysteine, yielding enzyme-bound cob(I)alamin and methionine. Subsequently, remethylates the cofactor using methyltetrahydrofolate (By similarity).</text>
</comment>
<comment type="catalytic activity">
    <reaction>
        <text>(6S)-5-methyl-5,6,7,8-tetrahydrofolate + L-homocysteine = (6S)-5,6,7,8-tetrahydrofolate + L-methionine</text>
        <dbReference type="Rhea" id="RHEA:11172"/>
        <dbReference type="ChEBI" id="CHEBI:18608"/>
        <dbReference type="ChEBI" id="CHEBI:57453"/>
        <dbReference type="ChEBI" id="CHEBI:57844"/>
        <dbReference type="ChEBI" id="CHEBI:58199"/>
        <dbReference type="EC" id="2.1.1.13"/>
    </reaction>
</comment>
<comment type="cofactor">
    <cofactor evidence="1">
        <name>methylcob(III)alamin</name>
        <dbReference type="ChEBI" id="CHEBI:28115"/>
    </cofactor>
</comment>
<comment type="cofactor">
    <cofactor evidence="1">
        <name>Zn(2+)</name>
        <dbReference type="ChEBI" id="CHEBI:29105"/>
    </cofactor>
    <text evidence="1">Binds 1 zinc ion per subunit.</text>
</comment>
<comment type="pathway">
    <text>Amino-acid biosynthesis; L-methionine biosynthesis via de novo pathway; L-methionine from L-homocysteine (MetH route): step 1/1.</text>
</comment>
<comment type="domain">
    <text evidence="1">Modular enzyme with four functionally distinct domains. The isolated Hcy-binding domain catalyzes methyl transfer from free methylcobalamin to homocysteine. The Hcy-binding domain in association with the pterin-binding domain catalyzes the methylation of cob(I)alamin by methyltetrahydrofolate and the methylation of homocysteine. The B12-binding domain binds the cofactor. The AdoMet activation domain binds S-adenosyl-L-methionine. Under aerobic conditions cob(I)alamin can be converted to inactive cob(II)alamin. Reductive methylation by S-adenosyl-L-methionine and flavodoxin regenerates methylcobalamin (By similarity).</text>
</comment>
<comment type="miscellaneous">
    <text evidence="1">L-homocysteine is bound via the zinc atom.</text>
</comment>
<comment type="similarity">
    <text evidence="8">Belongs to the vitamin-B12 dependent methionine synthase family.</text>
</comment>
<name>METH_ALIFS</name>
<proteinExistence type="inferred from homology"/>
<accession>Q9AJQ8</accession>
<organism>
    <name type="scientific">Aliivibrio fischeri</name>
    <name type="common">Vibrio fischeri</name>
    <dbReference type="NCBI Taxonomy" id="668"/>
    <lineage>
        <taxon>Bacteria</taxon>
        <taxon>Pseudomonadati</taxon>
        <taxon>Pseudomonadota</taxon>
        <taxon>Gammaproteobacteria</taxon>
        <taxon>Vibrionales</taxon>
        <taxon>Vibrionaceae</taxon>
        <taxon>Aliivibrio</taxon>
    </lineage>
</organism>